<proteinExistence type="inferred from homology"/>
<sequence>MDEIVRIVRDSMWYIPNVFMDDGKNEGHVSVNNVCHMYFTFFDVDTSSHLFKLVIKHCDLNKRGNSPLHCYTMNTRFNPSVLKILLHHGMRNFDSKDEKGHHYQSITRSLIY</sequence>
<accession>Q805H0</accession>
<organismHost>
    <name type="scientific">Bos taurus</name>
    <name type="common">Bovine</name>
    <dbReference type="NCBI Taxonomy" id="9913"/>
</organismHost>
<name>B25_VACCW</name>
<comment type="similarity">
    <text evidence="1">Belongs to the orthopoxviruses B25 protein family.</text>
</comment>
<organism>
    <name type="scientific">Vaccinia virus (strain Western Reserve)</name>
    <name type="common">VACV</name>
    <name type="synonym">Vaccinia virus (strain WR)</name>
    <dbReference type="NCBI Taxonomy" id="10254"/>
    <lineage>
        <taxon>Viruses</taxon>
        <taxon>Varidnaviria</taxon>
        <taxon>Bamfordvirae</taxon>
        <taxon>Nucleocytoviricota</taxon>
        <taxon>Pokkesviricetes</taxon>
        <taxon>Chitovirales</taxon>
        <taxon>Poxviridae</taxon>
        <taxon>Chordopoxvirinae</taxon>
        <taxon>Orthopoxvirus</taxon>
        <taxon>Vaccinia virus</taxon>
    </lineage>
</organism>
<gene>
    <name type="ordered locus">VACWR008</name>
</gene>
<gene>
    <name type="ordered locus">VACWR211</name>
</gene>
<evidence type="ECO:0000305" key="1"/>
<dbReference type="EMBL" id="AY243312">
    <property type="protein sequence ID" value="AAO89287.1"/>
    <property type="molecule type" value="Genomic_DNA"/>
</dbReference>
<dbReference type="EMBL" id="AY243312">
    <property type="protein sequence ID" value="AAO89490.1"/>
    <property type="molecule type" value="Genomic_DNA"/>
</dbReference>
<dbReference type="SMR" id="Q805H0"/>
<dbReference type="DNASU" id="3707588"/>
<dbReference type="DNASU" id="3707623"/>
<dbReference type="KEGG" id="vg:3707588"/>
<dbReference type="KEGG" id="vg:3707623"/>
<dbReference type="Proteomes" id="UP000000344">
    <property type="component" value="Genome"/>
</dbReference>
<protein>
    <recommendedName>
        <fullName>Truncated ankyrin repeat protein B25</fullName>
    </recommendedName>
</protein>
<feature type="chain" id="PRO_0000412625" description="Truncated ankyrin repeat protein B25">
    <location>
        <begin position="1"/>
        <end position="112"/>
    </location>
</feature>
<reference key="1">
    <citation type="submission" date="2003-02" db="EMBL/GenBank/DDBJ databases">
        <title>Sequencing of the coding region of Vaccinia-WR to an average 9-fold redundancy and an error rate of 0.16/10kb.</title>
        <authorList>
            <person name="Esposito J.J."/>
            <person name="Frace A.M."/>
            <person name="Sammons S.A."/>
            <person name="Olsen-Rasmussen M."/>
            <person name="Osborne J."/>
            <person name="Wohlhueter R."/>
        </authorList>
    </citation>
    <scope>NUCLEOTIDE SEQUENCE [LARGE SCALE GENOMIC DNA]</scope>
</reference>
<keyword id="KW-1185">Reference proteome</keyword>